<protein>
    <recommendedName>
        <fullName>Uncharacterized protein YIL163C</fullName>
    </recommendedName>
</protein>
<feature type="chain" id="PRO_0000202951" description="Uncharacterized protein YIL163C">
    <location>
        <begin position="1"/>
        <end position="117"/>
    </location>
</feature>
<accession>P40448</accession>
<accession>I2HB62</accession>
<sequence>MFLFRRKDYRIEIQKKKVVKSFFQMVYYRALRQHFCQTKSFKHSSKRNVSMMVIGKHRAYLKSLRHHIKGFIITFLVSFSRNLHGKTLDVGSINATRISSPPDNFLNWVFSFYSCSE</sequence>
<dbReference type="EMBL" id="Z46921">
    <property type="protein sequence ID" value="CAA87029.1"/>
    <property type="molecule type" value="Genomic_DNA"/>
</dbReference>
<dbReference type="EMBL" id="BK006942">
    <property type="protein sequence ID" value="DAA35116.1"/>
    <property type="molecule type" value="Genomic_DNA"/>
</dbReference>
<dbReference type="PIR" id="S50364">
    <property type="entry name" value="S50364"/>
</dbReference>
<dbReference type="RefSeq" id="NP_001257678.1">
    <property type="nucleotide sequence ID" value="NM_001270749.1"/>
</dbReference>
<dbReference type="SMR" id="P40448"/>
<dbReference type="BioGRID" id="300774">
    <property type="interactions" value="24"/>
</dbReference>
<dbReference type="DIP" id="DIP-1210N"/>
<dbReference type="FunCoup" id="P40448">
    <property type="interactions" value="14"/>
</dbReference>
<dbReference type="IntAct" id="P40448">
    <property type="interactions" value="2"/>
</dbReference>
<dbReference type="MINT" id="P40448"/>
<dbReference type="STRING" id="4932.YIL163C"/>
<dbReference type="PaxDb" id="4932-YIL163C"/>
<dbReference type="EnsemblFungi" id="YIL163C_mRNA">
    <property type="protein sequence ID" value="YIL163C"/>
    <property type="gene ID" value="YIL163C"/>
</dbReference>
<dbReference type="GeneID" id="854643"/>
<dbReference type="KEGG" id="sce:YIL163C"/>
<dbReference type="AGR" id="SGD:S000001425"/>
<dbReference type="SGD" id="S000001425">
    <property type="gene designation" value="YIL163C"/>
</dbReference>
<dbReference type="VEuPathDB" id="FungiDB:YIL163C"/>
<dbReference type="HOGENOM" id="CLU_2086679_0_0_1"/>
<dbReference type="InParanoid" id="P40448"/>
<dbReference type="OrthoDB" id="10283278at2759"/>
<dbReference type="BioCyc" id="YEAST:G3O-31409-MONOMER"/>
<dbReference type="BioGRID-ORCS" id="854643">
    <property type="hits" value="0 hits in 10 CRISPR screens"/>
</dbReference>
<dbReference type="PRO" id="PR:P40448"/>
<dbReference type="Proteomes" id="UP000002311">
    <property type="component" value="Chromosome IX"/>
</dbReference>
<dbReference type="RNAct" id="P40448">
    <property type="molecule type" value="protein"/>
</dbReference>
<proteinExistence type="predicted"/>
<organism>
    <name type="scientific">Saccharomyces cerevisiae (strain ATCC 204508 / S288c)</name>
    <name type="common">Baker's yeast</name>
    <dbReference type="NCBI Taxonomy" id="559292"/>
    <lineage>
        <taxon>Eukaryota</taxon>
        <taxon>Fungi</taxon>
        <taxon>Dikarya</taxon>
        <taxon>Ascomycota</taxon>
        <taxon>Saccharomycotina</taxon>
        <taxon>Saccharomycetes</taxon>
        <taxon>Saccharomycetales</taxon>
        <taxon>Saccharomycetaceae</taxon>
        <taxon>Saccharomyces</taxon>
    </lineage>
</organism>
<name>YIQ3_YEAST</name>
<gene>
    <name type="ordered locus">YIL163C</name>
</gene>
<keyword id="KW-1185">Reference proteome</keyword>
<reference key="1">
    <citation type="journal article" date="1997" name="Nature">
        <title>The nucleotide sequence of Saccharomyces cerevisiae chromosome IX.</title>
        <authorList>
            <person name="Churcher C.M."/>
            <person name="Bowman S."/>
            <person name="Badcock K."/>
            <person name="Bankier A.T."/>
            <person name="Brown D."/>
            <person name="Chillingworth T."/>
            <person name="Connor R."/>
            <person name="Devlin K."/>
            <person name="Gentles S."/>
            <person name="Hamlin N."/>
            <person name="Harris D.E."/>
            <person name="Horsnell T."/>
            <person name="Hunt S."/>
            <person name="Jagels K."/>
            <person name="Jones M."/>
            <person name="Lye G."/>
            <person name="Moule S."/>
            <person name="Odell C."/>
            <person name="Pearson D."/>
            <person name="Rajandream M.A."/>
            <person name="Rice P."/>
            <person name="Rowley N."/>
            <person name="Skelton J."/>
            <person name="Smith V."/>
            <person name="Walsh S.V."/>
            <person name="Whitehead S."/>
            <person name="Barrell B.G."/>
        </authorList>
    </citation>
    <scope>NUCLEOTIDE SEQUENCE [LARGE SCALE GENOMIC DNA]</scope>
    <source>
        <strain>ATCC 204508 / S288c</strain>
    </source>
</reference>
<reference key="2">
    <citation type="journal article" date="2014" name="G3 (Bethesda)">
        <title>The reference genome sequence of Saccharomyces cerevisiae: Then and now.</title>
        <authorList>
            <person name="Engel S.R."/>
            <person name="Dietrich F.S."/>
            <person name="Fisk D.G."/>
            <person name="Binkley G."/>
            <person name="Balakrishnan R."/>
            <person name="Costanzo M.C."/>
            <person name="Dwight S.S."/>
            <person name="Hitz B.C."/>
            <person name="Karra K."/>
            <person name="Nash R.S."/>
            <person name="Weng S."/>
            <person name="Wong E.D."/>
            <person name="Lloyd P."/>
            <person name="Skrzypek M.S."/>
            <person name="Miyasato S.R."/>
            <person name="Simison M."/>
            <person name="Cherry J.M."/>
        </authorList>
    </citation>
    <scope>GENOME REANNOTATION</scope>
    <source>
        <strain>ATCC 204508 / S288c</strain>
    </source>
</reference>
<reference key="3">
    <citation type="journal article" date="2012" name="Science">
        <title>High-resolution view of the yeast meiotic program revealed by ribosome profiling.</title>
        <authorList>
            <person name="Brar G.A."/>
            <person name="Yassour M."/>
            <person name="Friedman N."/>
            <person name="Regev A."/>
            <person name="Ingolia N.T."/>
            <person name="Weissman J.S."/>
        </authorList>
    </citation>
    <scope>IDENTIFICATION</scope>
</reference>